<evidence type="ECO:0000250" key="1"/>
<evidence type="ECO:0000250" key="2">
    <source>
        <dbReference type="UniProtKB" id="P04256"/>
    </source>
</evidence>
<evidence type="ECO:0000250" key="3">
    <source>
        <dbReference type="UniProtKB" id="P09651"/>
    </source>
</evidence>
<evidence type="ECO:0000250" key="4">
    <source>
        <dbReference type="UniProtKB" id="P09867"/>
    </source>
</evidence>
<evidence type="ECO:0000255" key="5">
    <source>
        <dbReference type="PROSITE-ProRule" id="PRU00176"/>
    </source>
</evidence>
<evidence type="ECO:0000256" key="6">
    <source>
        <dbReference type="SAM" id="MobiDB-lite"/>
    </source>
</evidence>
<evidence type="ECO:0000305" key="7"/>
<evidence type="ECO:0007744" key="8">
    <source>
    </source>
</evidence>
<evidence type="ECO:0007744" key="9">
    <source>
    </source>
</evidence>
<evidence type="ECO:0007744" key="10">
    <source>
    </source>
</evidence>
<evidence type="ECO:0007744" key="11">
    <source>
    </source>
</evidence>
<evidence type="ECO:0007744" key="12">
    <source>
    </source>
</evidence>
<evidence type="ECO:0007744" key="13">
    <source>
    </source>
</evidence>
<gene>
    <name type="primary">Hnrnpa1</name>
    <name type="synonym">Fli-2</name>
    <name type="synonym">Hnrpa1</name>
    <name type="synonym">Tis</name>
</gene>
<name>ROA1_MOUSE</name>
<accession>P49312</accession>
<accession>P97312</accession>
<accession>Q3V269</accession>
<reference key="1">
    <citation type="journal article" date="1992" name="Mol. Cell. Biol.">
        <title>Retroviral insertions downstream of the heterogeneous nuclear ribonucleoprotein A1 gene in erythroleukemia cells: evidence that A1 is not essential for cell growth.</title>
        <authorList>
            <person name="Ben-David Y."/>
            <person name="Bani M.R."/>
            <person name="Chabot B."/>
            <person name="de Koven A."/>
            <person name="Bernstein A."/>
        </authorList>
    </citation>
    <scope>NUCLEOTIDE SEQUENCE [MRNA]</scope>
</reference>
<reference key="2">
    <citation type="journal article" date="1996" name="Biochem. Biophys. Res. Commun.">
        <title>Molecular cloning of the genes suppressed in RVC lymphoma cells by topoisomerase inhibitors.</title>
        <authorList>
            <person name="Onishi Y."/>
            <person name="Kizaki H."/>
        </authorList>
    </citation>
    <scope>NUCLEOTIDE SEQUENCE [MRNA]</scope>
    <source>
        <tissue>Lymphoma</tissue>
    </source>
</reference>
<reference key="3">
    <citation type="journal article" date="2005" name="Science">
        <title>The transcriptional landscape of the mammalian genome.</title>
        <authorList>
            <person name="Carninci P."/>
            <person name="Kasukawa T."/>
            <person name="Katayama S."/>
            <person name="Gough J."/>
            <person name="Frith M.C."/>
            <person name="Maeda N."/>
            <person name="Oyama R."/>
            <person name="Ravasi T."/>
            <person name="Lenhard B."/>
            <person name="Wells C."/>
            <person name="Kodzius R."/>
            <person name="Shimokawa K."/>
            <person name="Bajic V.B."/>
            <person name="Brenner S.E."/>
            <person name="Batalov S."/>
            <person name="Forrest A.R."/>
            <person name="Zavolan M."/>
            <person name="Davis M.J."/>
            <person name="Wilming L.G."/>
            <person name="Aidinis V."/>
            <person name="Allen J.E."/>
            <person name="Ambesi-Impiombato A."/>
            <person name="Apweiler R."/>
            <person name="Aturaliya R.N."/>
            <person name="Bailey T.L."/>
            <person name="Bansal M."/>
            <person name="Baxter L."/>
            <person name="Beisel K.W."/>
            <person name="Bersano T."/>
            <person name="Bono H."/>
            <person name="Chalk A.M."/>
            <person name="Chiu K.P."/>
            <person name="Choudhary V."/>
            <person name="Christoffels A."/>
            <person name="Clutterbuck D.R."/>
            <person name="Crowe M.L."/>
            <person name="Dalla E."/>
            <person name="Dalrymple B.P."/>
            <person name="de Bono B."/>
            <person name="Della Gatta G."/>
            <person name="di Bernardo D."/>
            <person name="Down T."/>
            <person name="Engstrom P."/>
            <person name="Fagiolini M."/>
            <person name="Faulkner G."/>
            <person name="Fletcher C.F."/>
            <person name="Fukushima T."/>
            <person name="Furuno M."/>
            <person name="Futaki S."/>
            <person name="Gariboldi M."/>
            <person name="Georgii-Hemming P."/>
            <person name="Gingeras T.R."/>
            <person name="Gojobori T."/>
            <person name="Green R.E."/>
            <person name="Gustincich S."/>
            <person name="Harbers M."/>
            <person name="Hayashi Y."/>
            <person name="Hensch T.K."/>
            <person name="Hirokawa N."/>
            <person name="Hill D."/>
            <person name="Huminiecki L."/>
            <person name="Iacono M."/>
            <person name="Ikeo K."/>
            <person name="Iwama A."/>
            <person name="Ishikawa T."/>
            <person name="Jakt M."/>
            <person name="Kanapin A."/>
            <person name="Katoh M."/>
            <person name="Kawasawa Y."/>
            <person name="Kelso J."/>
            <person name="Kitamura H."/>
            <person name="Kitano H."/>
            <person name="Kollias G."/>
            <person name="Krishnan S.P."/>
            <person name="Kruger A."/>
            <person name="Kummerfeld S.K."/>
            <person name="Kurochkin I.V."/>
            <person name="Lareau L.F."/>
            <person name="Lazarevic D."/>
            <person name="Lipovich L."/>
            <person name="Liu J."/>
            <person name="Liuni S."/>
            <person name="McWilliam S."/>
            <person name="Madan Babu M."/>
            <person name="Madera M."/>
            <person name="Marchionni L."/>
            <person name="Matsuda H."/>
            <person name="Matsuzawa S."/>
            <person name="Miki H."/>
            <person name="Mignone F."/>
            <person name="Miyake S."/>
            <person name="Morris K."/>
            <person name="Mottagui-Tabar S."/>
            <person name="Mulder N."/>
            <person name="Nakano N."/>
            <person name="Nakauchi H."/>
            <person name="Ng P."/>
            <person name="Nilsson R."/>
            <person name="Nishiguchi S."/>
            <person name="Nishikawa S."/>
            <person name="Nori F."/>
            <person name="Ohara O."/>
            <person name="Okazaki Y."/>
            <person name="Orlando V."/>
            <person name="Pang K.C."/>
            <person name="Pavan W.J."/>
            <person name="Pavesi G."/>
            <person name="Pesole G."/>
            <person name="Petrovsky N."/>
            <person name="Piazza S."/>
            <person name="Reed J."/>
            <person name="Reid J.F."/>
            <person name="Ring B.Z."/>
            <person name="Ringwald M."/>
            <person name="Rost B."/>
            <person name="Ruan Y."/>
            <person name="Salzberg S.L."/>
            <person name="Sandelin A."/>
            <person name="Schneider C."/>
            <person name="Schoenbach C."/>
            <person name="Sekiguchi K."/>
            <person name="Semple C.A."/>
            <person name="Seno S."/>
            <person name="Sessa L."/>
            <person name="Sheng Y."/>
            <person name="Shibata Y."/>
            <person name="Shimada H."/>
            <person name="Shimada K."/>
            <person name="Silva D."/>
            <person name="Sinclair B."/>
            <person name="Sperling S."/>
            <person name="Stupka E."/>
            <person name="Sugiura K."/>
            <person name="Sultana R."/>
            <person name="Takenaka Y."/>
            <person name="Taki K."/>
            <person name="Tammoja K."/>
            <person name="Tan S.L."/>
            <person name="Tang S."/>
            <person name="Taylor M.S."/>
            <person name="Tegner J."/>
            <person name="Teichmann S.A."/>
            <person name="Ueda H.R."/>
            <person name="van Nimwegen E."/>
            <person name="Verardo R."/>
            <person name="Wei C.L."/>
            <person name="Yagi K."/>
            <person name="Yamanishi H."/>
            <person name="Zabarovsky E."/>
            <person name="Zhu S."/>
            <person name="Zimmer A."/>
            <person name="Hide W."/>
            <person name="Bult C."/>
            <person name="Grimmond S.M."/>
            <person name="Teasdale R.D."/>
            <person name="Liu E.T."/>
            <person name="Brusic V."/>
            <person name="Quackenbush J."/>
            <person name="Wahlestedt C."/>
            <person name="Mattick J.S."/>
            <person name="Hume D.A."/>
            <person name="Kai C."/>
            <person name="Sasaki D."/>
            <person name="Tomaru Y."/>
            <person name="Fukuda S."/>
            <person name="Kanamori-Katayama M."/>
            <person name="Suzuki M."/>
            <person name="Aoki J."/>
            <person name="Arakawa T."/>
            <person name="Iida J."/>
            <person name="Imamura K."/>
            <person name="Itoh M."/>
            <person name="Kato T."/>
            <person name="Kawaji H."/>
            <person name="Kawagashira N."/>
            <person name="Kawashima T."/>
            <person name="Kojima M."/>
            <person name="Kondo S."/>
            <person name="Konno H."/>
            <person name="Nakano K."/>
            <person name="Ninomiya N."/>
            <person name="Nishio T."/>
            <person name="Okada M."/>
            <person name="Plessy C."/>
            <person name="Shibata K."/>
            <person name="Shiraki T."/>
            <person name="Suzuki S."/>
            <person name="Tagami M."/>
            <person name="Waki K."/>
            <person name="Watahiki A."/>
            <person name="Okamura-Oho Y."/>
            <person name="Suzuki H."/>
            <person name="Kawai J."/>
            <person name="Hayashizaki Y."/>
        </authorList>
    </citation>
    <scope>NUCLEOTIDE SEQUENCE [LARGE SCALE MRNA]</scope>
    <source>
        <strain>C57BL/6J</strain>
        <strain>DBA/2J</strain>
        <tissue>Amnion</tissue>
        <tissue>Liver</tissue>
        <tissue>Muellerian duct</tissue>
        <tissue>Pancreas</tissue>
        <tissue>Thymus</tissue>
    </source>
</reference>
<reference key="4">
    <citation type="journal article" date="2004" name="Genome Res.">
        <title>The status, quality, and expansion of the NIH full-length cDNA project: the Mammalian Gene Collection (MGC).</title>
        <authorList>
            <consortium name="The MGC Project Team"/>
        </authorList>
    </citation>
    <scope>NUCLEOTIDE SEQUENCE [LARGE SCALE MRNA] (ISOFORM LONG)</scope>
    <source>
        <tissue>Limb</tissue>
        <tissue>Olfactory epithelium</tissue>
    </source>
</reference>
<reference key="5">
    <citation type="submission" date="2009-01" db="UniProtKB">
        <authorList>
            <person name="Lubec G."/>
            <person name="Yang J.W."/>
            <person name="Zigmond M."/>
            <person name="Sunyer B."/>
            <person name="Chen W.-Q."/>
        </authorList>
    </citation>
    <scope>PROTEIN SEQUENCE OF 107-113 AND 285-300</scope>
    <source>
        <strain>OF1</strain>
        <tissue>Brain</tissue>
        <tissue>Hippocampus</tissue>
    </source>
</reference>
<reference key="6">
    <citation type="journal article" date="2007" name="Proc. Natl. Acad. Sci. U.S.A.">
        <title>Large-scale phosphorylation analysis of mouse liver.</title>
        <authorList>
            <person name="Villen J."/>
            <person name="Beausoleil S.A."/>
            <person name="Gerber S.A."/>
            <person name="Gygi S.P."/>
        </authorList>
    </citation>
    <scope>PHOSPHORYLATION [LARGE SCALE ANALYSIS] AT SER-6</scope>
    <scope>IDENTIFICATION BY MASS SPECTROMETRY [LARGE SCALE ANALYSIS]</scope>
    <source>
        <tissue>Liver</tissue>
    </source>
</reference>
<reference key="7">
    <citation type="journal article" date="2009" name="Immunity">
        <title>The phagosomal proteome in interferon-gamma-activated macrophages.</title>
        <authorList>
            <person name="Trost M."/>
            <person name="English L."/>
            <person name="Lemieux S."/>
            <person name="Courcelles M."/>
            <person name="Desjardins M."/>
            <person name="Thibault P."/>
        </authorList>
    </citation>
    <scope>PHOSPHORYLATION [LARGE SCALE ANALYSIS] AT SER-6</scope>
    <scope>IDENTIFICATION BY MASS SPECTROMETRY [LARGE SCALE ANALYSIS]</scope>
</reference>
<reference key="8">
    <citation type="journal article" date="2009" name="Mol. Cell. Proteomics">
        <title>Large scale localization of protein phosphorylation by use of electron capture dissociation mass spectrometry.</title>
        <authorList>
            <person name="Sweet S.M."/>
            <person name="Bailey C.M."/>
            <person name="Cunningham D.L."/>
            <person name="Heath J.K."/>
            <person name="Cooper H.J."/>
        </authorList>
    </citation>
    <scope>PHOSPHORYLATION [LARGE SCALE ANALYSIS] AT SER-6</scope>
    <scope>IDENTIFICATION BY MASS SPECTROMETRY [LARGE SCALE ANALYSIS]</scope>
    <source>
        <tissue>Embryonic fibroblast</tissue>
    </source>
</reference>
<reference key="9">
    <citation type="journal article" date="2010" name="Cell">
        <title>A tissue-specific atlas of mouse protein phosphorylation and expression.</title>
        <authorList>
            <person name="Huttlin E.L."/>
            <person name="Jedrychowski M.P."/>
            <person name="Elias J.E."/>
            <person name="Goswami T."/>
            <person name="Rad R."/>
            <person name="Beausoleil S.A."/>
            <person name="Villen J."/>
            <person name="Haas W."/>
            <person name="Sowa M.E."/>
            <person name="Gygi S.P."/>
        </authorList>
    </citation>
    <scope>PHOSPHORYLATION [LARGE SCALE ANALYSIS] AT SER-6 AND SER-22</scope>
    <scope>IDENTIFICATION BY MASS SPECTROMETRY [LARGE SCALE ANALYSIS]</scope>
    <source>
        <tissue>Brain</tissue>
        <tissue>Brown adipose tissue</tissue>
        <tissue>Heart</tissue>
        <tissue>Kidney</tissue>
        <tissue>Liver</tissue>
        <tissue>Lung</tissue>
        <tissue>Pancreas</tissue>
        <tissue>Spleen</tissue>
        <tissue>Testis</tissue>
    </source>
</reference>
<reference key="10">
    <citation type="journal article" date="2013" name="Mol. Cell">
        <title>SIRT5-mediated lysine desuccinylation impacts diverse metabolic pathways.</title>
        <authorList>
            <person name="Park J."/>
            <person name="Chen Y."/>
            <person name="Tishkoff D.X."/>
            <person name="Peng C."/>
            <person name="Tan M."/>
            <person name="Dai L."/>
            <person name="Xie Z."/>
            <person name="Zhang Y."/>
            <person name="Zwaans B.M."/>
            <person name="Skinner M.E."/>
            <person name="Lombard D.B."/>
            <person name="Zhao Y."/>
        </authorList>
    </citation>
    <scope>ACETYLATION [LARGE SCALE ANALYSIS] AT LYS-298</scope>
    <scope>IDENTIFICATION BY MASS SPECTROMETRY [LARGE SCALE ANALYSIS]</scope>
    <source>
        <tissue>Embryonic fibroblast</tissue>
    </source>
</reference>
<reference key="11">
    <citation type="journal article" date="2014" name="Mol. Cell. Proteomics">
        <title>Immunoaffinity enrichment and mass spectrometry analysis of protein methylation.</title>
        <authorList>
            <person name="Guo A."/>
            <person name="Gu H."/>
            <person name="Zhou J."/>
            <person name="Mulhern D."/>
            <person name="Wang Y."/>
            <person name="Lee K.A."/>
            <person name="Yang V."/>
            <person name="Aguiar M."/>
            <person name="Kornhauser J."/>
            <person name="Jia X."/>
            <person name="Ren J."/>
            <person name="Beausoleil S.A."/>
            <person name="Silva J.C."/>
            <person name="Vemulapalli V."/>
            <person name="Bedford M.T."/>
            <person name="Comb M.J."/>
        </authorList>
    </citation>
    <scope>METHYLATION [LARGE SCALE ANALYSIS] AT ARG-194; ARG-206; ARG-218; ARG-225; ARG-232; ARG-284 AND ARG-300</scope>
    <scope>IDENTIFICATION BY MASS SPECTROMETRY [LARGE SCALE ANALYSIS]</scope>
    <source>
        <tissue>Brain</tissue>
        <tissue>Embryo</tissue>
    </source>
</reference>
<keyword id="KW-0007">Acetylation</keyword>
<keyword id="KW-0025">Alternative splicing</keyword>
<keyword id="KW-0963">Cytoplasm</keyword>
<keyword id="KW-0903">Direct protein sequencing</keyword>
<keyword id="KW-1017">Isopeptide bond</keyword>
<keyword id="KW-0488">Methylation</keyword>
<keyword id="KW-0507">mRNA processing</keyword>
<keyword id="KW-0508">mRNA splicing</keyword>
<keyword id="KW-0509">mRNA transport</keyword>
<keyword id="KW-0539">Nucleus</keyword>
<keyword id="KW-0597">Phosphoprotein</keyword>
<keyword id="KW-1185">Reference proteome</keyword>
<keyword id="KW-0677">Repeat</keyword>
<keyword id="KW-0687">Ribonucleoprotein</keyword>
<keyword id="KW-0694">RNA-binding</keyword>
<keyword id="KW-0747">Spliceosome</keyword>
<keyword id="KW-0813">Transport</keyword>
<keyword id="KW-0832">Ubl conjugation</keyword>
<proteinExistence type="evidence at protein level"/>
<protein>
    <recommendedName>
        <fullName>Heterogeneous nuclear ribonucleoprotein A1</fullName>
        <shortName>hnRNP A1</shortName>
    </recommendedName>
    <alternativeName>
        <fullName>HDP-1</fullName>
    </alternativeName>
    <alternativeName>
        <fullName>Helix-destabilizing protein</fullName>
    </alternativeName>
    <alternativeName>
        <fullName>Single-strand-binding protein</fullName>
    </alternativeName>
    <alternativeName>
        <fullName>Topoisomerase-inhibitor suppressed</fullName>
    </alternativeName>
    <alternativeName>
        <fullName>hnRNP core protein A1</fullName>
    </alternativeName>
    <component>
        <recommendedName>
            <fullName>Heterogeneous nuclear ribonucleoprotein A1, N-terminally processed</fullName>
        </recommendedName>
    </component>
</protein>
<feature type="chain" id="PRO_0000424511" description="Heterogeneous nuclear ribonucleoprotein A1">
    <location>
        <begin position="1"/>
        <end position="320"/>
    </location>
</feature>
<feature type="initiator methionine" description="Removed; alternate" evidence="3">
    <location>
        <position position="1"/>
    </location>
</feature>
<feature type="chain" id="PRO_0000081830" description="Heterogeneous nuclear ribonucleoprotein A1, N-terminally processed">
    <location>
        <begin position="2"/>
        <end position="320"/>
    </location>
</feature>
<feature type="domain" description="RRM 1" evidence="5">
    <location>
        <begin position="14"/>
        <end position="97"/>
    </location>
</feature>
<feature type="domain" description="RRM 2" evidence="5">
    <location>
        <begin position="105"/>
        <end position="184"/>
    </location>
</feature>
<feature type="region of interest" description="Globular A domain">
    <location>
        <begin position="4"/>
        <end position="94"/>
    </location>
</feature>
<feature type="region of interest" description="Globular B domain">
    <location>
        <begin position="95"/>
        <end position="185"/>
    </location>
</feature>
<feature type="region of interest" description="Disordered" evidence="6">
    <location>
        <begin position="182"/>
        <end position="216"/>
    </location>
</feature>
<feature type="region of interest" description="RNA-binding RGG-box">
    <location>
        <begin position="218"/>
        <end position="240"/>
    </location>
</feature>
<feature type="region of interest" description="Nuclear targeting sequence" evidence="1">
    <location>
        <begin position="268"/>
        <end position="305"/>
    </location>
</feature>
<feature type="region of interest" description="Disordered" evidence="6">
    <location>
        <begin position="274"/>
        <end position="320"/>
    </location>
</feature>
<feature type="compositionally biased region" description="Gly residues" evidence="6">
    <location>
        <begin position="197"/>
        <end position="216"/>
    </location>
</feature>
<feature type="compositionally biased region" description="Gly residues" evidence="6">
    <location>
        <begin position="276"/>
        <end position="294"/>
    </location>
</feature>
<feature type="compositionally biased region" description="Low complexity" evidence="6">
    <location>
        <begin position="308"/>
        <end position="320"/>
    </location>
</feature>
<feature type="modified residue" description="N-acetylmethionine" evidence="3">
    <location>
        <position position="1"/>
    </location>
</feature>
<feature type="modified residue" description="N-acetylserine; in Heterogeneous nuclear ribonucleoprotein A1, N-terminally processed" evidence="3">
    <location>
        <position position="2"/>
    </location>
</feature>
<feature type="modified residue" description="Phosphoserine" evidence="3">
    <location>
        <position position="2"/>
    </location>
</feature>
<feature type="modified residue" description="N6-acetyllysine; alternate" evidence="3">
    <location>
        <position position="3"/>
    </location>
</feature>
<feature type="modified residue" description="Phosphoserine" evidence="3">
    <location>
        <position position="4"/>
    </location>
</feature>
<feature type="modified residue" description="Phosphoserine" evidence="8 9 10 11">
    <location>
        <position position="6"/>
    </location>
</feature>
<feature type="modified residue" description="Phosphoserine" evidence="11">
    <location>
        <position position="22"/>
    </location>
</feature>
<feature type="modified residue" description="Phosphoserine; by MKNK2" evidence="3">
    <location>
        <position position="192"/>
    </location>
</feature>
<feature type="modified residue" description="Asymmetric dimethylarginine; alternate" evidence="4">
    <location>
        <position position="194"/>
    </location>
</feature>
<feature type="modified residue" description="Dimethylated arginine; alternate" evidence="3">
    <location>
        <position position="194"/>
    </location>
</feature>
<feature type="modified residue" description="Omega-N-methylarginine; alternate" evidence="13">
    <location>
        <position position="194"/>
    </location>
</feature>
<feature type="modified residue" description="Phosphoserine" evidence="3">
    <location>
        <position position="199"/>
    </location>
</feature>
<feature type="modified residue" description="Asymmetric dimethylarginine; alternate" evidence="13">
    <location>
        <position position="206"/>
    </location>
</feature>
<feature type="modified residue" description="Dimethylated arginine; alternate" evidence="3">
    <location>
        <position position="206"/>
    </location>
</feature>
<feature type="modified residue" description="Omega-N-methylarginine; alternate" evidence="13">
    <location>
        <position position="206"/>
    </location>
</feature>
<feature type="modified residue" description="Asymmetric dimethylarginine; alternate" evidence="13">
    <location>
        <position position="218"/>
    </location>
</feature>
<feature type="modified residue" description="Omega-N-methylarginine; alternate" evidence="13">
    <location>
        <position position="218"/>
    </location>
</feature>
<feature type="modified residue" description="Asymmetric dimethylarginine; alternate" evidence="13">
    <location>
        <position position="225"/>
    </location>
</feature>
<feature type="modified residue" description="Dimethylated arginine; alternate" evidence="3">
    <location>
        <position position="225"/>
    </location>
</feature>
<feature type="modified residue" description="Omega-N-methylarginine; alternate" evidence="13">
    <location>
        <position position="225"/>
    </location>
</feature>
<feature type="modified residue" description="Asymmetric dimethylarginine; alternate" evidence="2">
    <location>
        <position position="232"/>
    </location>
</feature>
<feature type="modified residue" description="Omega-N-methylarginine; alternate" evidence="13">
    <location>
        <position position="232"/>
    </location>
</feature>
<feature type="modified residue" description="Omega-N-methylarginine" evidence="13">
    <location>
        <position position="284"/>
    </location>
</feature>
<feature type="modified residue" description="Phosphoserine" evidence="3">
    <location>
        <position position="285"/>
    </location>
</feature>
<feature type="modified residue" description="N6-acetyllysine; alternate" evidence="12">
    <location>
        <position position="298"/>
    </location>
</feature>
<feature type="modified residue" description="Omega-N-methylarginine" evidence="13">
    <location>
        <position position="300"/>
    </location>
</feature>
<feature type="modified residue" description="Phosphoserine" evidence="3">
    <location>
        <position position="309"/>
    </location>
</feature>
<feature type="modified residue" description="Phosphoserine; by MKNK2" evidence="3">
    <location>
        <position position="310"/>
    </location>
</feature>
<feature type="modified residue" description="Phosphoserine; by MKNK2" evidence="3">
    <location>
        <position position="311"/>
    </location>
</feature>
<feature type="modified residue" description="Phosphoserine; by MKNK2" evidence="3">
    <location>
        <position position="312"/>
    </location>
</feature>
<feature type="modified residue" description="Phosphoserine" evidence="3">
    <location>
        <position position="313"/>
    </location>
</feature>
<feature type="modified residue" description="Phosphoserine" evidence="3">
    <location>
        <position position="316"/>
    </location>
</feature>
<feature type="modified residue" description="Omega-N-methylarginine" evidence="3">
    <location>
        <position position="318"/>
    </location>
</feature>
<feature type="cross-link" description="Glycyl lysine isopeptide (Lys-Gly) (interchain with G-Cter in SUMO2); alternate" evidence="3">
    <location>
        <position position="3"/>
    </location>
</feature>
<feature type="cross-link" description="Glycyl lysine isopeptide (Lys-Gly) (interchain with G-Cter in SUMO2)" evidence="3">
    <location>
        <position position="8"/>
    </location>
</feature>
<feature type="cross-link" description="Glycyl lysine isopeptide (Lys-Gly) (interchain with G-Cter in SUMO2)" evidence="3">
    <location>
        <position position="78"/>
    </location>
</feature>
<feature type="cross-link" description="Glycyl lysine isopeptide (Lys-Gly) (interchain with G-Cter in SUMO)" evidence="1">
    <location>
        <position position="113"/>
    </location>
</feature>
<feature type="cross-link" description="Glycyl lysine isopeptide (Lys-Gly) (interchain with G-Cter in SUMO2)" evidence="3">
    <location>
        <position position="179"/>
    </location>
</feature>
<feature type="cross-link" description="Glycyl lysine isopeptide (Lys-Gly) (interchain with G-Cter in SUMO2)" evidence="3">
    <location>
        <position position="183"/>
    </location>
</feature>
<feature type="cross-link" description="Glycyl lysine isopeptide (Lys-Gly) (interchain with G-Cter in SUMO2); alternate" evidence="3">
    <location>
        <position position="298"/>
    </location>
</feature>
<feature type="splice variant" id="VSP_005825" description="In isoform Short." evidence="7">
    <location>
        <begin position="252"/>
        <end position="303"/>
    </location>
</feature>
<dbReference type="EMBL" id="M99167">
    <property type="protein sequence ID" value="AAA37633.1"/>
    <property type="molecule type" value="mRNA"/>
</dbReference>
<dbReference type="EMBL" id="D86729">
    <property type="protein sequence ID" value="BAA13162.1"/>
    <property type="molecule type" value="mRNA"/>
</dbReference>
<dbReference type="EMBL" id="D86728">
    <property type="protein sequence ID" value="BAA13161.1"/>
    <property type="molecule type" value="mRNA"/>
</dbReference>
<dbReference type="EMBL" id="AK007802">
    <property type="protein sequence ID" value="BAB25267.1"/>
    <property type="molecule type" value="mRNA"/>
</dbReference>
<dbReference type="EMBL" id="AK088308">
    <property type="protein sequence ID" value="BAC40273.1"/>
    <property type="molecule type" value="mRNA"/>
</dbReference>
<dbReference type="EMBL" id="AK131999">
    <property type="protein sequence ID" value="BAE20929.1"/>
    <property type="molecule type" value="mRNA"/>
</dbReference>
<dbReference type="EMBL" id="AK135391">
    <property type="protein sequence ID" value="BAE22518.1"/>
    <property type="molecule type" value="mRNA"/>
</dbReference>
<dbReference type="EMBL" id="AK161730">
    <property type="protein sequence ID" value="BAE36552.1"/>
    <property type="molecule type" value="mRNA"/>
</dbReference>
<dbReference type="EMBL" id="AK166901">
    <property type="protein sequence ID" value="BAE39104.1"/>
    <property type="molecule type" value="mRNA"/>
</dbReference>
<dbReference type="EMBL" id="AK167161">
    <property type="protein sequence ID" value="BAE39302.1"/>
    <property type="molecule type" value="mRNA"/>
</dbReference>
<dbReference type="EMBL" id="AK167810">
    <property type="protein sequence ID" value="BAE39837.1"/>
    <property type="molecule type" value="mRNA"/>
</dbReference>
<dbReference type="EMBL" id="AK167913">
    <property type="protein sequence ID" value="BAE39920.1"/>
    <property type="molecule type" value="mRNA"/>
</dbReference>
<dbReference type="EMBL" id="AK168420">
    <property type="protein sequence ID" value="BAE40333.1"/>
    <property type="molecule type" value="mRNA"/>
</dbReference>
<dbReference type="EMBL" id="AK168531">
    <property type="protein sequence ID" value="BAE40409.1"/>
    <property type="molecule type" value="mRNA"/>
</dbReference>
<dbReference type="EMBL" id="BC080675">
    <property type="protein sequence ID" value="AAH80675.1"/>
    <property type="molecule type" value="mRNA"/>
</dbReference>
<dbReference type="EMBL" id="BC083136">
    <property type="protein sequence ID" value="AAH83136.1"/>
    <property type="molecule type" value="mRNA"/>
</dbReference>
<dbReference type="CCDS" id="CCDS37233.1">
    <molecule id="P49312-1"/>
</dbReference>
<dbReference type="PIR" id="A44485">
    <property type="entry name" value="A44485"/>
</dbReference>
<dbReference type="RefSeq" id="NP_034577.1">
    <molecule id="P49312-1"/>
    <property type="nucleotide sequence ID" value="NM_010447.6"/>
</dbReference>
<dbReference type="BMRB" id="P49312"/>
<dbReference type="SMR" id="P49312"/>
<dbReference type="BioGRID" id="200357">
    <property type="interactions" value="25"/>
</dbReference>
<dbReference type="FunCoup" id="P49312">
    <property type="interactions" value="1810"/>
</dbReference>
<dbReference type="IntAct" id="P49312">
    <property type="interactions" value="13"/>
</dbReference>
<dbReference type="MINT" id="P49312"/>
<dbReference type="STRING" id="10090.ENSMUSP00000042658"/>
<dbReference type="GlyGen" id="P49312">
    <property type="glycosylation" value="2 sites, 1 O-linked glycan (2 sites)"/>
</dbReference>
<dbReference type="iPTMnet" id="P49312"/>
<dbReference type="PhosphoSitePlus" id="P49312"/>
<dbReference type="SwissPalm" id="P49312"/>
<dbReference type="jPOST" id="P49312"/>
<dbReference type="PaxDb" id="10090-ENSMUSP00000042658"/>
<dbReference type="PeptideAtlas" id="P49312"/>
<dbReference type="ProteomicsDB" id="301633">
    <molecule id="P49312-1"/>
</dbReference>
<dbReference type="ProteomicsDB" id="301634">
    <molecule id="P49312-2"/>
</dbReference>
<dbReference type="Pumba" id="P49312"/>
<dbReference type="TopDownProteomics" id="P49312-1">
    <molecule id="P49312-1"/>
</dbReference>
<dbReference type="Antibodypedia" id="7969">
    <property type="antibodies" value="512 antibodies from 39 providers"/>
</dbReference>
<dbReference type="DNASU" id="15382"/>
<dbReference type="Ensembl" id="ENSMUST00000087351.9">
    <molecule id="P49312-1"/>
    <property type="protein sequence ID" value="ENSMUSP00000084609.8"/>
    <property type="gene ID" value="ENSMUSG00000046434.17"/>
</dbReference>
<dbReference type="Ensembl" id="ENSMUST00000230171.2">
    <molecule id="P49312-1"/>
    <property type="protein sequence ID" value="ENSMUSP00000155833.2"/>
    <property type="gene ID" value="ENSMUSG00000046434.17"/>
</dbReference>
<dbReference type="Ensembl" id="ENSMUST00000231141.2">
    <molecule id="P49312-2"/>
    <property type="protein sequence ID" value="ENSMUSP00000155311.2"/>
    <property type="gene ID" value="ENSMUSG00000046434.17"/>
</dbReference>
<dbReference type="GeneID" id="15382"/>
<dbReference type="KEGG" id="mmu:15382"/>
<dbReference type="UCSC" id="uc007xxp.2">
    <molecule id="P49312-1"/>
    <property type="organism name" value="mouse"/>
</dbReference>
<dbReference type="UCSC" id="uc011zrp.1">
    <molecule id="P49312-2"/>
    <property type="organism name" value="mouse"/>
</dbReference>
<dbReference type="AGR" id="MGI:104820"/>
<dbReference type="CTD" id="3178"/>
<dbReference type="MGI" id="MGI:104820">
    <property type="gene designation" value="Hnrnpa1"/>
</dbReference>
<dbReference type="VEuPathDB" id="HostDB:ENSMUSG00000046434"/>
<dbReference type="GeneTree" id="ENSGT00950000183123"/>
<dbReference type="HOGENOM" id="CLU_012062_1_0_1"/>
<dbReference type="InParanoid" id="P49312"/>
<dbReference type="OrthoDB" id="6019873at2759"/>
<dbReference type="Reactome" id="R-MMU-6803529">
    <property type="pathway name" value="FGFR2 alternative splicing"/>
</dbReference>
<dbReference type="Reactome" id="R-MMU-72163">
    <property type="pathway name" value="mRNA Splicing - Major Pathway"/>
</dbReference>
<dbReference type="Reactome" id="R-MMU-72203">
    <property type="pathway name" value="Processing of Capped Intron-Containing Pre-mRNA"/>
</dbReference>
<dbReference type="BioGRID-ORCS" id="15382">
    <property type="hits" value="7 hits in 77 CRISPR screens"/>
</dbReference>
<dbReference type="CD-CODE" id="764D0258">
    <property type="entry name" value="Neuronal RNP granule"/>
</dbReference>
<dbReference type="CD-CODE" id="CE726F99">
    <property type="entry name" value="Postsynaptic density"/>
</dbReference>
<dbReference type="CD-CODE" id="D12E4DB9">
    <property type="entry name" value="Stress granule"/>
</dbReference>
<dbReference type="ChiTaRS" id="Hnrnpa1">
    <property type="organism name" value="mouse"/>
</dbReference>
<dbReference type="PRO" id="PR:P49312"/>
<dbReference type="Proteomes" id="UP000000589">
    <property type="component" value="Chromosome 15"/>
</dbReference>
<dbReference type="RNAct" id="P49312">
    <property type="molecule type" value="protein"/>
</dbReference>
<dbReference type="Bgee" id="ENSMUSG00000046434">
    <property type="expression patterns" value="Expressed in cortical plate and 266 other cell types or tissues"/>
</dbReference>
<dbReference type="ExpressionAtlas" id="P49312">
    <property type="expression patterns" value="baseline and differential"/>
</dbReference>
<dbReference type="GO" id="GO:0071013">
    <property type="term" value="C:catalytic step 2 spliceosome"/>
    <property type="evidence" value="ECO:0007669"/>
    <property type="project" value="Ensembl"/>
</dbReference>
<dbReference type="GO" id="GO:0005737">
    <property type="term" value="C:cytoplasm"/>
    <property type="evidence" value="ECO:0000250"/>
    <property type="project" value="HGNC-UCL"/>
</dbReference>
<dbReference type="GO" id="GO:0005654">
    <property type="term" value="C:nucleoplasm"/>
    <property type="evidence" value="ECO:0000250"/>
    <property type="project" value="HGNC-UCL"/>
</dbReference>
<dbReference type="GO" id="GO:0005634">
    <property type="term" value="C:nucleus"/>
    <property type="evidence" value="ECO:0000314"/>
    <property type="project" value="MGI"/>
</dbReference>
<dbReference type="GO" id="GO:1990904">
    <property type="term" value="C:ribonucleoprotein complex"/>
    <property type="evidence" value="ECO:0000250"/>
    <property type="project" value="UniProtKB"/>
</dbReference>
<dbReference type="GO" id="GO:0005681">
    <property type="term" value="C:spliceosomal complex"/>
    <property type="evidence" value="ECO:0000250"/>
    <property type="project" value="HGNC-UCL"/>
</dbReference>
<dbReference type="GO" id="GO:0045202">
    <property type="term" value="C:synapse"/>
    <property type="evidence" value="ECO:0000314"/>
    <property type="project" value="SynGO"/>
</dbReference>
<dbReference type="GO" id="GO:0098505">
    <property type="term" value="F:G-rich strand telomeric DNA binding"/>
    <property type="evidence" value="ECO:0007669"/>
    <property type="project" value="Ensembl"/>
</dbReference>
<dbReference type="GO" id="GO:0035198">
    <property type="term" value="F:miRNA binding"/>
    <property type="evidence" value="ECO:0000250"/>
    <property type="project" value="UniProtKB"/>
</dbReference>
<dbReference type="GO" id="GO:0036002">
    <property type="term" value="F:pre-mRNA binding"/>
    <property type="evidence" value="ECO:0007669"/>
    <property type="project" value="Ensembl"/>
</dbReference>
<dbReference type="GO" id="GO:0019904">
    <property type="term" value="F:protein domain specific binding"/>
    <property type="evidence" value="ECO:0007669"/>
    <property type="project" value="Ensembl"/>
</dbReference>
<dbReference type="GO" id="GO:0003697">
    <property type="term" value="F:single-stranded DNA binding"/>
    <property type="evidence" value="ECO:0000250"/>
    <property type="project" value="HGNC-UCL"/>
</dbReference>
<dbReference type="GO" id="GO:0061752">
    <property type="term" value="F:telomeric repeat-containing RNA binding"/>
    <property type="evidence" value="ECO:0007669"/>
    <property type="project" value="Ensembl"/>
</dbReference>
<dbReference type="GO" id="GO:0000380">
    <property type="term" value="P:alternative mRNA splicing, via spliceosome"/>
    <property type="evidence" value="ECO:0000314"/>
    <property type="project" value="MGI"/>
</dbReference>
<dbReference type="GO" id="GO:0042149">
    <property type="term" value="P:cellular response to glucose starvation"/>
    <property type="evidence" value="ECO:0007669"/>
    <property type="project" value="Ensembl"/>
</dbReference>
<dbReference type="GO" id="GO:1903936">
    <property type="term" value="P:cellular response to sodium arsenite"/>
    <property type="evidence" value="ECO:0000250"/>
    <property type="project" value="UniProtKB"/>
</dbReference>
<dbReference type="GO" id="GO:0051170">
    <property type="term" value="P:import into nucleus"/>
    <property type="evidence" value="ECO:0000250"/>
    <property type="project" value="HGNC-UCL"/>
</dbReference>
<dbReference type="GO" id="GO:0051028">
    <property type="term" value="P:mRNA transport"/>
    <property type="evidence" value="ECO:0007669"/>
    <property type="project" value="UniProtKB-KW"/>
</dbReference>
<dbReference type="GO" id="GO:0032211">
    <property type="term" value="P:negative regulation of telomere maintenance via telomerase"/>
    <property type="evidence" value="ECO:0007669"/>
    <property type="project" value="Ensembl"/>
</dbReference>
<dbReference type="GO" id="GO:0051168">
    <property type="term" value="P:nuclear export"/>
    <property type="evidence" value="ECO:0000250"/>
    <property type="project" value="HGNC-UCL"/>
</dbReference>
<dbReference type="GO" id="GO:0032212">
    <property type="term" value="P:positive regulation of telomere maintenance via telomerase"/>
    <property type="evidence" value="ECO:0007669"/>
    <property type="project" value="Ensembl"/>
</dbReference>
<dbReference type="GO" id="GO:0000381">
    <property type="term" value="P:regulation of alternative mRNA splicing, via spliceosome"/>
    <property type="evidence" value="ECO:0007669"/>
    <property type="project" value="Ensembl"/>
</dbReference>
<dbReference type="GO" id="GO:0008380">
    <property type="term" value="P:RNA splicing"/>
    <property type="evidence" value="ECO:0000314"/>
    <property type="project" value="MGI"/>
</dbReference>
<dbReference type="CDD" id="cd12761">
    <property type="entry name" value="RRM1_hnRNPA1"/>
    <property type="match status" value="1"/>
</dbReference>
<dbReference type="CDD" id="cd12582">
    <property type="entry name" value="RRM2_hnRNPA3"/>
    <property type="match status" value="1"/>
</dbReference>
<dbReference type="FunFam" id="3.30.70.330:FF:000048">
    <property type="entry name" value="Heterogeneous nuclear ribonucleoprotein a1 isoform"/>
    <property type="match status" value="1"/>
</dbReference>
<dbReference type="FunFam" id="3.30.70.330:FF:000429">
    <property type="entry name" value="Heterogeneous nuclear ribonucleoprotein A1-like 2"/>
    <property type="match status" value="1"/>
</dbReference>
<dbReference type="Gene3D" id="3.30.70.330">
    <property type="match status" value="2"/>
</dbReference>
<dbReference type="InterPro" id="IPR034516">
    <property type="entry name" value="hnRNPA1/3_RRM2"/>
</dbReference>
<dbReference type="InterPro" id="IPR021662">
    <property type="entry name" value="HnRNPA1/A2_C"/>
</dbReference>
<dbReference type="InterPro" id="IPR034845">
    <property type="entry name" value="hnRNPA1_RRM1"/>
</dbReference>
<dbReference type="InterPro" id="IPR012677">
    <property type="entry name" value="Nucleotide-bd_a/b_plait_sf"/>
</dbReference>
<dbReference type="InterPro" id="IPR035979">
    <property type="entry name" value="RBD_domain_sf"/>
</dbReference>
<dbReference type="InterPro" id="IPR000504">
    <property type="entry name" value="RRM_dom"/>
</dbReference>
<dbReference type="PANTHER" id="PTHR48026:SF2">
    <property type="entry name" value="HETEROGENEOUS NUCLEAR RIBONUCLEOPROTEIN A1-RELATED"/>
    <property type="match status" value="1"/>
</dbReference>
<dbReference type="PANTHER" id="PTHR48026">
    <property type="entry name" value="HOMOLOGOUS TO DROSOPHILA SQD (SQUID) PROTEIN"/>
    <property type="match status" value="1"/>
</dbReference>
<dbReference type="Pfam" id="PF11627">
    <property type="entry name" value="HnRNPA1_LC"/>
    <property type="match status" value="1"/>
</dbReference>
<dbReference type="Pfam" id="PF00076">
    <property type="entry name" value="RRM_1"/>
    <property type="match status" value="2"/>
</dbReference>
<dbReference type="SMART" id="SM00360">
    <property type="entry name" value="RRM"/>
    <property type="match status" value="2"/>
</dbReference>
<dbReference type="SUPFAM" id="SSF54928">
    <property type="entry name" value="RNA-binding domain, RBD"/>
    <property type="match status" value="2"/>
</dbReference>
<dbReference type="PROSITE" id="PS50102">
    <property type="entry name" value="RRM"/>
    <property type="match status" value="2"/>
</dbReference>
<organism>
    <name type="scientific">Mus musculus</name>
    <name type="common">Mouse</name>
    <dbReference type="NCBI Taxonomy" id="10090"/>
    <lineage>
        <taxon>Eukaryota</taxon>
        <taxon>Metazoa</taxon>
        <taxon>Chordata</taxon>
        <taxon>Craniata</taxon>
        <taxon>Vertebrata</taxon>
        <taxon>Euteleostomi</taxon>
        <taxon>Mammalia</taxon>
        <taxon>Eutheria</taxon>
        <taxon>Euarchontoglires</taxon>
        <taxon>Glires</taxon>
        <taxon>Rodentia</taxon>
        <taxon>Myomorpha</taxon>
        <taxon>Muroidea</taxon>
        <taxon>Muridae</taxon>
        <taxon>Murinae</taxon>
        <taxon>Mus</taxon>
        <taxon>Mus</taxon>
    </lineage>
</organism>
<sequence length="320" mass="34196">MSKSESPKEPEQLRKLFIGGLSFETTDESLRSHFEQWGTLTDCVVMRDPNTKRSRGFGFVTYATVEEVDAAMNARPHKVDGRVVEPKRAVSREDSQRPGAHLTVKKIFVGGIKEDTEEHHLRDYFEQYGKIEVIEIMTDRGSGKKRGFAFVTFDDHDSVDKIVIQKYHTVNGHNCEVRKALSKQEMASASSSQRGRSGSGNFGGGRGGGFGGNDNFGRGGNFSGRGGFGGSRGGGGYGGSGDGYNGFGNDGSNFGGGGSYNDFGNYNNQSSNFGPMKGGNFGGRSSGPYGGGGQYFAKPRNQGGYGGSSSSSSYGSGRRF</sequence>
<comment type="function">
    <text evidence="3">Involved in the packaging of pre-mRNA into hnRNP particles, transport of poly(A) mRNA from the nucleus to the cytoplasm and modulation of splice site selection. Plays a role in the splicing of pyruvate kinase PKM by binding repressively to sequences flanking PKM exon 9, inhibiting exon 9 inclusion and resulting in exon 10 inclusion and production of the PKM M2 isoform. Binds to the IRES and thereby inhibits the translation of the apoptosis protease activating factor APAF1. May bind to specific miRNA hairpins.</text>
</comment>
<comment type="subunit">
    <text evidence="3">Identified in the spliceosome C complex. Identified in a IGF2BP1-dependent mRNP granule complex containing untranslated mRNAs. Interacts with SEPT6. Interacts with C9orf72. Interacts with KHDRBS1. Interacts with UBQLN2 (By similarity). Interacts with PPIA/CYPA (By similarity).</text>
</comment>
<comment type="subcellular location">
    <subcellularLocation>
        <location evidence="3">Nucleus</location>
    </subcellularLocation>
    <subcellularLocation>
        <location evidence="3">Cytoplasm</location>
    </subcellularLocation>
    <text evidence="3">Localized in cytoplasmic mRNP granules containing untranslated mRNAs. Shuttles continuously between the nucleus and the cytoplasm along with mRNA. Component of ribonucleosomes.</text>
</comment>
<comment type="alternative products">
    <event type="alternative splicing"/>
    <isoform>
        <id>P49312-1</id>
        <name>Long</name>
        <sequence type="displayed"/>
    </isoform>
    <isoform>
        <id>P49312-2</id>
        <name>Short</name>
        <sequence type="described" ref="VSP_005825"/>
    </isoform>
</comment>
<comment type="PTM">
    <text evidence="1">Sumoylated.</text>
</comment>